<evidence type="ECO:0000255" key="1">
    <source>
        <dbReference type="HAMAP-Rule" id="MF_00060"/>
    </source>
</evidence>
<gene>
    <name evidence="1" type="primary">surE</name>
    <name type="ordered locus">RPB_2739</name>
</gene>
<proteinExistence type="inferred from homology"/>
<sequence>MRILCTNDDGIHAPGLKIVEDIARALSDDVWVVAPELDQSGVSHSLSLNDPLRLREVGPRHFAVRGTPTDCVIMGARHILADKAPDLVLSGVNRGRNVAEDVVYSGTIAGALEGTILGLPSFALSQEFTLETRNAPLWDTAKAHGPEILRKAIKAGVPKNTVININFPACAPDEVAGVQVTRQGKRNQGFLRVDERHDGRGNPYFWIGFERVAVVDMPAEGTDLAALAAKYISVTPLRLDRTDEAFSATLAKTLG</sequence>
<keyword id="KW-0963">Cytoplasm</keyword>
<keyword id="KW-0378">Hydrolase</keyword>
<keyword id="KW-0479">Metal-binding</keyword>
<keyword id="KW-0547">Nucleotide-binding</keyword>
<keyword id="KW-1185">Reference proteome</keyword>
<accession>Q2IWG9</accession>
<organism>
    <name type="scientific">Rhodopseudomonas palustris (strain HaA2)</name>
    <dbReference type="NCBI Taxonomy" id="316058"/>
    <lineage>
        <taxon>Bacteria</taxon>
        <taxon>Pseudomonadati</taxon>
        <taxon>Pseudomonadota</taxon>
        <taxon>Alphaproteobacteria</taxon>
        <taxon>Hyphomicrobiales</taxon>
        <taxon>Nitrobacteraceae</taxon>
        <taxon>Rhodopseudomonas</taxon>
    </lineage>
</organism>
<comment type="function">
    <text evidence="1">Nucleotidase that shows phosphatase activity on nucleoside 5'-monophosphates.</text>
</comment>
<comment type="catalytic activity">
    <reaction evidence="1">
        <text>a ribonucleoside 5'-phosphate + H2O = a ribonucleoside + phosphate</text>
        <dbReference type="Rhea" id="RHEA:12484"/>
        <dbReference type="ChEBI" id="CHEBI:15377"/>
        <dbReference type="ChEBI" id="CHEBI:18254"/>
        <dbReference type="ChEBI" id="CHEBI:43474"/>
        <dbReference type="ChEBI" id="CHEBI:58043"/>
        <dbReference type="EC" id="3.1.3.5"/>
    </reaction>
</comment>
<comment type="cofactor">
    <cofactor evidence="1">
        <name>a divalent metal cation</name>
        <dbReference type="ChEBI" id="CHEBI:60240"/>
    </cofactor>
    <text evidence="1">Binds 1 divalent metal cation per subunit.</text>
</comment>
<comment type="subcellular location">
    <subcellularLocation>
        <location evidence="1">Cytoplasm</location>
    </subcellularLocation>
</comment>
<comment type="similarity">
    <text evidence="1">Belongs to the SurE nucleotidase family.</text>
</comment>
<reference key="1">
    <citation type="submission" date="2006-01" db="EMBL/GenBank/DDBJ databases">
        <title>Complete sequence of Rhodopseudomonas palustris HaA2.</title>
        <authorList>
            <consortium name="US DOE Joint Genome Institute"/>
            <person name="Copeland A."/>
            <person name="Lucas S."/>
            <person name="Lapidus A."/>
            <person name="Barry K."/>
            <person name="Detter J.C."/>
            <person name="Glavina T."/>
            <person name="Hammon N."/>
            <person name="Israni S."/>
            <person name="Pitluck S."/>
            <person name="Chain P."/>
            <person name="Malfatti S."/>
            <person name="Shin M."/>
            <person name="Vergez L."/>
            <person name="Schmutz J."/>
            <person name="Larimer F."/>
            <person name="Land M."/>
            <person name="Hauser L."/>
            <person name="Pelletier D.A."/>
            <person name="Kyrpides N."/>
            <person name="Anderson I."/>
            <person name="Oda Y."/>
            <person name="Harwood C.S."/>
            <person name="Richardson P."/>
        </authorList>
    </citation>
    <scope>NUCLEOTIDE SEQUENCE [LARGE SCALE GENOMIC DNA]</scope>
    <source>
        <strain>HaA2</strain>
    </source>
</reference>
<protein>
    <recommendedName>
        <fullName evidence="1">5'-nucleotidase SurE</fullName>
        <ecNumber evidence="1">3.1.3.5</ecNumber>
    </recommendedName>
    <alternativeName>
        <fullName evidence="1">Nucleoside 5'-monophosphate phosphohydrolase</fullName>
    </alternativeName>
</protein>
<feature type="chain" id="PRO_1000007780" description="5'-nucleotidase SurE">
    <location>
        <begin position="1"/>
        <end position="255"/>
    </location>
</feature>
<feature type="binding site" evidence="1">
    <location>
        <position position="8"/>
    </location>
    <ligand>
        <name>a divalent metal cation</name>
        <dbReference type="ChEBI" id="CHEBI:60240"/>
    </ligand>
</feature>
<feature type="binding site" evidence="1">
    <location>
        <position position="9"/>
    </location>
    <ligand>
        <name>a divalent metal cation</name>
        <dbReference type="ChEBI" id="CHEBI:60240"/>
    </ligand>
</feature>
<feature type="binding site" evidence="1">
    <location>
        <position position="40"/>
    </location>
    <ligand>
        <name>a divalent metal cation</name>
        <dbReference type="ChEBI" id="CHEBI:60240"/>
    </ligand>
</feature>
<feature type="binding site" evidence="1">
    <location>
        <position position="93"/>
    </location>
    <ligand>
        <name>a divalent metal cation</name>
        <dbReference type="ChEBI" id="CHEBI:60240"/>
    </ligand>
</feature>
<name>SURE_RHOP2</name>
<dbReference type="EC" id="3.1.3.5" evidence="1"/>
<dbReference type="EMBL" id="CP000250">
    <property type="protein sequence ID" value="ABD07441.1"/>
    <property type="molecule type" value="Genomic_DNA"/>
</dbReference>
<dbReference type="RefSeq" id="WP_011441626.1">
    <property type="nucleotide sequence ID" value="NC_007778.1"/>
</dbReference>
<dbReference type="SMR" id="Q2IWG9"/>
<dbReference type="STRING" id="316058.RPB_2739"/>
<dbReference type="KEGG" id="rpb:RPB_2739"/>
<dbReference type="eggNOG" id="COG0496">
    <property type="taxonomic scope" value="Bacteria"/>
</dbReference>
<dbReference type="HOGENOM" id="CLU_045192_1_2_5"/>
<dbReference type="OrthoDB" id="9780815at2"/>
<dbReference type="Proteomes" id="UP000008809">
    <property type="component" value="Chromosome"/>
</dbReference>
<dbReference type="GO" id="GO:0005737">
    <property type="term" value="C:cytoplasm"/>
    <property type="evidence" value="ECO:0007669"/>
    <property type="project" value="UniProtKB-SubCell"/>
</dbReference>
<dbReference type="GO" id="GO:0008254">
    <property type="term" value="F:3'-nucleotidase activity"/>
    <property type="evidence" value="ECO:0007669"/>
    <property type="project" value="TreeGrafter"/>
</dbReference>
<dbReference type="GO" id="GO:0008253">
    <property type="term" value="F:5'-nucleotidase activity"/>
    <property type="evidence" value="ECO:0007669"/>
    <property type="project" value="UniProtKB-UniRule"/>
</dbReference>
<dbReference type="GO" id="GO:0004309">
    <property type="term" value="F:exopolyphosphatase activity"/>
    <property type="evidence" value="ECO:0007669"/>
    <property type="project" value="TreeGrafter"/>
</dbReference>
<dbReference type="GO" id="GO:0046872">
    <property type="term" value="F:metal ion binding"/>
    <property type="evidence" value="ECO:0007669"/>
    <property type="project" value="UniProtKB-UniRule"/>
</dbReference>
<dbReference type="GO" id="GO:0000166">
    <property type="term" value="F:nucleotide binding"/>
    <property type="evidence" value="ECO:0007669"/>
    <property type="project" value="UniProtKB-KW"/>
</dbReference>
<dbReference type="FunFam" id="3.40.1210.10:FF:000001">
    <property type="entry name" value="5'/3'-nucleotidase SurE"/>
    <property type="match status" value="1"/>
</dbReference>
<dbReference type="Gene3D" id="3.40.1210.10">
    <property type="entry name" value="Survival protein SurE-like phosphatase/nucleotidase"/>
    <property type="match status" value="1"/>
</dbReference>
<dbReference type="HAMAP" id="MF_00060">
    <property type="entry name" value="SurE"/>
    <property type="match status" value="1"/>
</dbReference>
<dbReference type="InterPro" id="IPR030048">
    <property type="entry name" value="SurE"/>
</dbReference>
<dbReference type="InterPro" id="IPR002828">
    <property type="entry name" value="SurE-like_Pase/nucleotidase"/>
</dbReference>
<dbReference type="InterPro" id="IPR036523">
    <property type="entry name" value="SurE-like_sf"/>
</dbReference>
<dbReference type="NCBIfam" id="NF001490">
    <property type="entry name" value="PRK00346.1-4"/>
    <property type="match status" value="1"/>
</dbReference>
<dbReference type="NCBIfam" id="TIGR00087">
    <property type="entry name" value="surE"/>
    <property type="match status" value="1"/>
</dbReference>
<dbReference type="PANTHER" id="PTHR30457">
    <property type="entry name" value="5'-NUCLEOTIDASE SURE"/>
    <property type="match status" value="1"/>
</dbReference>
<dbReference type="PANTHER" id="PTHR30457:SF12">
    <property type="entry name" value="5'_3'-NUCLEOTIDASE SURE"/>
    <property type="match status" value="1"/>
</dbReference>
<dbReference type="Pfam" id="PF01975">
    <property type="entry name" value="SurE"/>
    <property type="match status" value="1"/>
</dbReference>
<dbReference type="SUPFAM" id="SSF64167">
    <property type="entry name" value="SurE-like"/>
    <property type="match status" value="1"/>
</dbReference>